<organism>
    <name type="scientific">Escherichia coli</name>
    <dbReference type="NCBI Taxonomy" id="562"/>
    <lineage>
        <taxon>Bacteria</taxon>
        <taxon>Pseudomonadati</taxon>
        <taxon>Pseudomonadota</taxon>
        <taxon>Gammaproteobacteria</taxon>
        <taxon>Enterobacterales</taxon>
        <taxon>Enterobacteriaceae</taxon>
        <taxon>Escherichia</taxon>
    </lineage>
</organism>
<accession>E1ANH6</accession>
<dbReference type="EC" id="3.5.2.6"/>
<dbReference type="EMBL" id="HM776707">
    <property type="protein sequence ID" value="ADM08178.1"/>
    <property type="molecule type" value="Genomic_DNA"/>
</dbReference>
<dbReference type="RefSeq" id="WP_063860093.1">
    <property type="nucleotide sequence ID" value="NG_049051.1"/>
</dbReference>
<dbReference type="PDB" id="5A90">
    <property type="method" value="Neutron"/>
    <property type="resolution" value="1.70 A"/>
    <property type="chains" value="A=30-291"/>
</dbReference>
<dbReference type="PDB" id="5A91">
    <property type="method" value="X-ray"/>
    <property type="resolution" value="1.20 A"/>
    <property type="chains" value="A=30-291"/>
</dbReference>
<dbReference type="PDB" id="5A92">
    <property type="method" value="X-ray"/>
    <property type="resolution" value="1.05 A"/>
    <property type="chains" value="A=30-291"/>
</dbReference>
<dbReference type="PDB" id="5A93">
    <property type="method" value="Other"/>
    <property type="resolution" value="1.60 A"/>
    <property type="chains" value="A=30-291"/>
</dbReference>
<dbReference type="PDB" id="5G18">
    <property type="method" value="X-ray"/>
    <property type="resolution" value="1.10 A"/>
    <property type="chains" value="A=30-291"/>
</dbReference>
<dbReference type="PDBsum" id="5A90"/>
<dbReference type="PDBsum" id="5A91"/>
<dbReference type="PDBsum" id="5A92"/>
<dbReference type="PDBsum" id="5A93"/>
<dbReference type="PDBsum" id="5G18"/>
<dbReference type="SMR" id="E1ANH6"/>
<dbReference type="CARD" id="ARO:3005667">
    <property type="molecule name" value="CTX-M-97"/>
    <property type="mechanism identifier" value="ARO:0001004"/>
    <property type="mechanism name" value="antibiotic inactivation"/>
</dbReference>
<dbReference type="KEGG" id="ag:ADM08178"/>
<dbReference type="EvolutionaryTrace" id="E1ANH6"/>
<dbReference type="GO" id="GO:0008800">
    <property type="term" value="F:beta-lactamase activity"/>
    <property type="evidence" value="ECO:0007669"/>
    <property type="project" value="UniProtKB-EC"/>
</dbReference>
<dbReference type="GO" id="GO:0030655">
    <property type="term" value="P:beta-lactam antibiotic catabolic process"/>
    <property type="evidence" value="ECO:0007669"/>
    <property type="project" value="InterPro"/>
</dbReference>
<dbReference type="GO" id="GO:0046677">
    <property type="term" value="P:response to antibiotic"/>
    <property type="evidence" value="ECO:0007669"/>
    <property type="project" value="UniProtKB-KW"/>
</dbReference>
<dbReference type="Gene3D" id="3.40.710.10">
    <property type="entry name" value="DD-peptidase/beta-lactamase superfamily"/>
    <property type="match status" value="1"/>
</dbReference>
<dbReference type="InterPro" id="IPR012338">
    <property type="entry name" value="Beta-lactam/transpept-like"/>
</dbReference>
<dbReference type="InterPro" id="IPR045155">
    <property type="entry name" value="Beta-lactam_cat"/>
</dbReference>
<dbReference type="InterPro" id="IPR000871">
    <property type="entry name" value="Beta-lactam_class-A"/>
</dbReference>
<dbReference type="InterPro" id="IPR023650">
    <property type="entry name" value="Beta-lactam_class-A_AS"/>
</dbReference>
<dbReference type="NCBIfam" id="NF033103">
    <property type="entry name" value="bla_class_A"/>
    <property type="match status" value="1"/>
</dbReference>
<dbReference type="NCBIfam" id="NF033089">
    <property type="entry name" value="blaCTX-M"/>
    <property type="match status" value="1"/>
</dbReference>
<dbReference type="PANTHER" id="PTHR35333">
    <property type="entry name" value="BETA-LACTAMASE"/>
    <property type="match status" value="1"/>
</dbReference>
<dbReference type="PANTHER" id="PTHR35333:SF3">
    <property type="entry name" value="BETA-LACTAMASE-TYPE TRANSPEPTIDASE FOLD CONTAINING PROTEIN"/>
    <property type="match status" value="1"/>
</dbReference>
<dbReference type="Pfam" id="PF13354">
    <property type="entry name" value="Beta-lactamase2"/>
    <property type="match status" value="1"/>
</dbReference>
<dbReference type="PRINTS" id="PR00118">
    <property type="entry name" value="BLACTAMASEA"/>
</dbReference>
<dbReference type="SUPFAM" id="SSF56601">
    <property type="entry name" value="beta-lactamase/transpeptidase-like"/>
    <property type="match status" value="1"/>
</dbReference>
<dbReference type="PROSITE" id="PS00146">
    <property type="entry name" value="BETA_LACTAMASE_A"/>
    <property type="match status" value="1"/>
</dbReference>
<protein>
    <recommendedName>
        <fullName>Beta-lactamase CTX-M-97</fullName>
        <ecNumber>3.5.2.6</ecNumber>
    </recommendedName>
</protein>
<reference key="1">
    <citation type="journal article" date="2013" name="Eur. J. Clin. Microbiol. Infect. Dis.">
        <title>The emergence and dissemination of CTX-M-producing Escherichia coli sequence type 131 causing community-onset bacteremia in Israel.</title>
        <authorList>
            <person name="Karfunkel D."/>
            <person name="Carmeli Y."/>
            <person name="Chmelnitsky I."/>
            <person name="Kotlovsky T."/>
            <person name="Navon-Venezia S."/>
        </authorList>
    </citation>
    <scope>NUCLEOTIDE SEQUENCE [GENOMIC DNA]</scope>
    <scope>PROBABLE FUNCTION</scope>
    <source>
        <strain>B275</strain>
    </source>
</reference>
<reference key="2">
    <citation type="journal article" date="1991" name="Biochem. J.">
        <title>A standard numbering scheme for the class A beta-lactamases.</title>
        <authorList>
            <person name="Ambler R.P."/>
            <person name="Coulson A.F."/>
            <person name="Frere J.M."/>
            <person name="Ghuysen J.M."/>
            <person name="Joris B."/>
            <person name="Forsman M."/>
            <person name="Levesque R.C."/>
            <person name="Tiraby G."/>
            <person name="Waley S.G."/>
        </authorList>
    </citation>
    <scope>AMINO ACID NUMBERING SCHEME</scope>
</reference>
<sequence length="291" mass="31279">MMTQSIGRSMLTVMATLPLLFSSATLHAQANSVQQQLEALEKSSGGRLGVALINTADNSQILYRADERFAMCSTSKVMAAAAVLKQSESDKHLLNQRVEIKKSDLVNYNPIAEKHVNGTMTLAELGAAALQYSDNTAMNKLIAHLGGPDKVTAFARSLGDETFRLDRTEPTLNTAIPGDPRDTTTPLAMAQTLKNLTLGKALAETQRAQLVTWLKGNTTGSASIRAGLPKSWVVGDKTGSGDYGTTNDIAVIWPENHAPLVLVTYFTQPEQKAESRRDILAAAAKIVTHGF</sequence>
<keyword id="KW-0002">3D-structure</keyword>
<keyword id="KW-0046">Antibiotic resistance</keyword>
<keyword id="KW-0378">Hydrolase</keyword>
<keyword id="KW-0732">Signal</keyword>
<name>BLC97_ECOLX</name>
<proteinExistence type="evidence at protein level"/>
<feature type="signal peptide" evidence="2">
    <location>
        <begin position="1"/>
        <end position="28"/>
    </location>
</feature>
<feature type="chain" id="PRO_0000420868" description="Beta-lactamase CTX-M-97">
    <location>
        <begin position="29"/>
        <end position="291"/>
    </location>
</feature>
<feature type="active site" description="Acyl-ester intermediate" evidence="3">
    <location>
        <position position="73"/>
    </location>
</feature>
<feature type="binding site" evidence="1">
    <location>
        <begin position="237"/>
        <end position="239"/>
    </location>
    <ligand>
        <name>substrate</name>
    </ligand>
</feature>
<feature type="helix" evidence="6">
    <location>
        <begin position="33"/>
        <end position="44"/>
    </location>
</feature>
<feature type="strand" evidence="6">
    <location>
        <begin position="46"/>
        <end position="54"/>
    </location>
</feature>
<feature type="turn" evidence="6">
    <location>
        <begin position="55"/>
        <end position="57"/>
    </location>
</feature>
<feature type="strand" evidence="6">
    <location>
        <begin position="60"/>
        <end position="64"/>
    </location>
</feature>
<feature type="helix" evidence="6">
    <location>
        <begin position="72"/>
        <end position="75"/>
    </location>
</feature>
<feature type="helix" evidence="6">
    <location>
        <begin position="76"/>
        <end position="87"/>
    </location>
</feature>
<feature type="strand" evidence="6">
    <location>
        <begin position="97"/>
        <end position="99"/>
    </location>
</feature>
<feature type="helix" evidence="6">
    <location>
        <begin position="102"/>
        <end position="104"/>
    </location>
</feature>
<feature type="helix" evidence="6">
    <location>
        <begin position="112"/>
        <end position="115"/>
    </location>
</feature>
<feature type="strand" evidence="6">
    <location>
        <begin position="118"/>
        <end position="121"/>
    </location>
</feature>
<feature type="helix" evidence="6">
    <location>
        <begin position="122"/>
        <end position="132"/>
    </location>
</feature>
<feature type="helix" evidence="6">
    <location>
        <begin position="135"/>
        <end position="145"/>
    </location>
</feature>
<feature type="helix" evidence="6">
    <location>
        <begin position="148"/>
        <end position="157"/>
    </location>
</feature>
<feature type="helix" evidence="6">
    <location>
        <begin position="171"/>
        <end position="173"/>
    </location>
</feature>
<feature type="helix" evidence="6">
    <location>
        <begin position="186"/>
        <end position="198"/>
    </location>
</feature>
<feature type="strand" evidence="6">
    <location>
        <begin position="199"/>
        <end position="202"/>
    </location>
</feature>
<feature type="helix" evidence="6">
    <location>
        <begin position="204"/>
        <end position="215"/>
    </location>
</feature>
<feature type="turn" evidence="6">
    <location>
        <begin position="221"/>
        <end position="223"/>
    </location>
</feature>
<feature type="helix" evidence="6">
    <location>
        <begin position="224"/>
        <end position="227"/>
    </location>
</feature>
<feature type="strand" evidence="6">
    <location>
        <begin position="232"/>
        <end position="240"/>
    </location>
</feature>
<feature type="strand" evidence="6">
    <location>
        <begin position="246"/>
        <end position="253"/>
    </location>
</feature>
<feature type="strand" evidence="6">
    <location>
        <begin position="255"/>
        <end position="257"/>
    </location>
</feature>
<feature type="strand" evidence="6">
    <location>
        <begin position="260"/>
        <end position="267"/>
    </location>
</feature>
<feature type="helix" evidence="6">
    <location>
        <begin position="277"/>
        <end position="288"/>
    </location>
</feature>
<comment type="function">
    <text>Is probably capable of hydrolyzing cephalosporins such as ceftriaxone and ceftazidime, thus conferring resistance to these antibiotics.</text>
</comment>
<comment type="catalytic activity">
    <reaction evidence="3">
        <text>a beta-lactam + H2O = a substituted beta-amino acid</text>
        <dbReference type="Rhea" id="RHEA:20401"/>
        <dbReference type="ChEBI" id="CHEBI:15377"/>
        <dbReference type="ChEBI" id="CHEBI:35627"/>
        <dbReference type="ChEBI" id="CHEBI:140347"/>
        <dbReference type="EC" id="3.5.2.6"/>
    </reaction>
</comment>
<comment type="miscellaneous">
    <text evidence="5">The class A beta-lactamase family has a specific amino-acid numbering system, sometimes called Ambler or ABL numbering and often misspelt as Amber. A multiple sequence alignment was used to derive a consensus sequence and then the consensus was numbered taking into account insertions and deletions. This allows use of identical numbers, e.g. for active site residues, despite differences in protein length. UniProt always uses natural numbering of residues, hence there appear to be differences in numbering between this entry and some papers.</text>
</comment>
<comment type="similarity">
    <text evidence="4">Belongs to the class-A beta-lactamase family.</text>
</comment>
<gene>
    <name type="primary">bla</name>
</gene>
<evidence type="ECO:0000250" key="1"/>
<evidence type="ECO:0000255" key="2"/>
<evidence type="ECO:0000255" key="3">
    <source>
        <dbReference type="PROSITE-ProRule" id="PRU10101"/>
    </source>
</evidence>
<evidence type="ECO:0000305" key="4"/>
<evidence type="ECO:0000305" key="5">
    <source>
    </source>
</evidence>
<evidence type="ECO:0007829" key="6">
    <source>
        <dbReference type="PDB" id="5A92"/>
    </source>
</evidence>